<accession>Q63DV8</accession>
<sequence>MSTVNELVNLVDETYDISQIEKEIGLDNIALSDLELLATGGYSPLTGFLGKKDYDSVVETLRLANGSVWSIPITLPVTEEVAETLKVGEEVKLVNGGNVYGVIQIEDIFVPDKEKEALLVYKTTDEAHPGVKKLYERPNVYVGGAIVLTKRFENNPFPSYHLDPIETREEFKKRGWKTVVGFQTRNPVHRAHEYIQKSALEIVDGLFLNPLVGETKSDDIPADVRMESYEVLLQNYYPKNRVFLSVFPAAMRYAGPREAIFHALVRKNFGCTHFIVGRDHAGVGDYYGTYEAQEIFANFTVEELGITPLFFEHSFYCTKCEAMASTKTCPHGKEDHVILSGTKVRELLRNGEVPPSTFSRKEVVEVLIKGLKKEVVTE</sequence>
<dbReference type="EC" id="2.7.7.4" evidence="1"/>
<dbReference type="EMBL" id="CP000001">
    <property type="protein sequence ID" value="AAU18943.1"/>
    <property type="molecule type" value="Genomic_DNA"/>
</dbReference>
<dbReference type="RefSeq" id="WP_000108772.1">
    <property type="nucleotide sequence ID" value="NC_006274.1"/>
</dbReference>
<dbReference type="SMR" id="Q63DV8"/>
<dbReference type="KEGG" id="bcz:BCE33L1305"/>
<dbReference type="PATRIC" id="fig|288681.22.peg.4247"/>
<dbReference type="UniPathway" id="UPA00140">
    <property type="reaction ID" value="UER00204"/>
</dbReference>
<dbReference type="Proteomes" id="UP000002612">
    <property type="component" value="Chromosome"/>
</dbReference>
<dbReference type="GO" id="GO:0005524">
    <property type="term" value="F:ATP binding"/>
    <property type="evidence" value="ECO:0007669"/>
    <property type="project" value="UniProtKB-KW"/>
</dbReference>
<dbReference type="GO" id="GO:0004781">
    <property type="term" value="F:sulfate adenylyltransferase (ATP) activity"/>
    <property type="evidence" value="ECO:0007669"/>
    <property type="project" value="UniProtKB-UniRule"/>
</dbReference>
<dbReference type="GO" id="GO:0070814">
    <property type="term" value="P:hydrogen sulfide biosynthetic process"/>
    <property type="evidence" value="ECO:0007669"/>
    <property type="project" value="UniProtKB-UniRule"/>
</dbReference>
<dbReference type="GO" id="GO:0000103">
    <property type="term" value="P:sulfate assimilation"/>
    <property type="evidence" value="ECO:0007669"/>
    <property type="project" value="UniProtKB-UniRule"/>
</dbReference>
<dbReference type="CDD" id="cd00517">
    <property type="entry name" value="ATPS"/>
    <property type="match status" value="1"/>
</dbReference>
<dbReference type="Gene3D" id="3.40.50.620">
    <property type="entry name" value="HUPs"/>
    <property type="match status" value="1"/>
</dbReference>
<dbReference type="Gene3D" id="3.10.400.10">
    <property type="entry name" value="Sulfate adenylyltransferase"/>
    <property type="match status" value="1"/>
</dbReference>
<dbReference type="HAMAP" id="MF_00066">
    <property type="entry name" value="Sulf_adenylyltr"/>
    <property type="match status" value="1"/>
</dbReference>
<dbReference type="InterPro" id="IPR025980">
    <property type="entry name" value="ATP-Sase_PUA-like_dom"/>
</dbReference>
<dbReference type="InterPro" id="IPR015947">
    <property type="entry name" value="PUA-like_sf"/>
</dbReference>
<dbReference type="InterPro" id="IPR014729">
    <property type="entry name" value="Rossmann-like_a/b/a_fold"/>
</dbReference>
<dbReference type="InterPro" id="IPR020792">
    <property type="entry name" value="SO4_adenylyltransferase_pro"/>
</dbReference>
<dbReference type="InterPro" id="IPR024951">
    <property type="entry name" value="Sulfurylase_cat_dom"/>
</dbReference>
<dbReference type="InterPro" id="IPR002650">
    <property type="entry name" value="Sulphate_adenylyltransferase"/>
</dbReference>
<dbReference type="NCBIfam" id="NF003166">
    <property type="entry name" value="PRK04149.1"/>
    <property type="match status" value="1"/>
</dbReference>
<dbReference type="NCBIfam" id="TIGR00339">
    <property type="entry name" value="sopT"/>
    <property type="match status" value="1"/>
</dbReference>
<dbReference type="PANTHER" id="PTHR43509">
    <property type="match status" value="1"/>
</dbReference>
<dbReference type="PANTHER" id="PTHR43509:SF1">
    <property type="entry name" value="SULFATE ADENYLYLTRANSFERASE"/>
    <property type="match status" value="1"/>
</dbReference>
<dbReference type="Pfam" id="PF01747">
    <property type="entry name" value="ATP-sulfurylase"/>
    <property type="match status" value="1"/>
</dbReference>
<dbReference type="Pfam" id="PF14306">
    <property type="entry name" value="PUA_2"/>
    <property type="match status" value="1"/>
</dbReference>
<dbReference type="SUPFAM" id="SSF52374">
    <property type="entry name" value="Nucleotidylyl transferase"/>
    <property type="match status" value="1"/>
</dbReference>
<dbReference type="SUPFAM" id="SSF88697">
    <property type="entry name" value="PUA domain-like"/>
    <property type="match status" value="1"/>
</dbReference>
<proteinExistence type="inferred from homology"/>
<name>SAT_BACCZ</name>
<organism>
    <name type="scientific">Bacillus cereus (strain ZK / E33L)</name>
    <dbReference type="NCBI Taxonomy" id="288681"/>
    <lineage>
        <taxon>Bacteria</taxon>
        <taxon>Bacillati</taxon>
        <taxon>Bacillota</taxon>
        <taxon>Bacilli</taxon>
        <taxon>Bacillales</taxon>
        <taxon>Bacillaceae</taxon>
        <taxon>Bacillus</taxon>
        <taxon>Bacillus cereus group</taxon>
    </lineage>
</organism>
<gene>
    <name evidence="1" type="primary">sat</name>
    <name type="ordered locus">BCE33L1305</name>
</gene>
<reference key="1">
    <citation type="journal article" date="2006" name="J. Bacteriol.">
        <title>Pathogenomic sequence analysis of Bacillus cereus and Bacillus thuringiensis isolates closely related to Bacillus anthracis.</title>
        <authorList>
            <person name="Han C.S."/>
            <person name="Xie G."/>
            <person name="Challacombe J.F."/>
            <person name="Altherr M.R."/>
            <person name="Bhotika S.S."/>
            <person name="Bruce D."/>
            <person name="Campbell C.S."/>
            <person name="Campbell M.L."/>
            <person name="Chen J."/>
            <person name="Chertkov O."/>
            <person name="Cleland C."/>
            <person name="Dimitrijevic M."/>
            <person name="Doggett N.A."/>
            <person name="Fawcett J.J."/>
            <person name="Glavina T."/>
            <person name="Goodwin L.A."/>
            <person name="Hill K.K."/>
            <person name="Hitchcock P."/>
            <person name="Jackson P.J."/>
            <person name="Keim P."/>
            <person name="Kewalramani A.R."/>
            <person name="Longmire J."/>
            <person name="Lucas S."/>
            <person name="Malfatti S."/>
            <person name="McMurry K."/>
            <person name="Meincke L.J."/>
            <person name="Misra M."/>
            <person name="Moseman B.L."/>
            <person name="Mundt M."/>
            <person name="Munk A.C."/>
            <person name="Okinaka R.T."/>
            <person name="Parson-Quintana B."/>
            <person name="Reilly L.P."/>
            <person name="Richardson P."/>
            <person name="Robinson D.L."/>
            <person name="Rubin E."/>
            <person name="Saunders E."/>
            <person name="Tapia R."/>
            <person name="Tesmer J.G."/>
            <person name="Thayer N."/>
            <person name="Thompson L.S."/>
            <person name="Tice H."/>
            <person name="Ticknor L.O."/>
            <person name="Wills P.L."/>
            <person name="Brettin T.S."/>
            <person name="Gilna P."/>
        </authorList>
    </citation>
    <scope>NUCLEOTIDE SEQUENCE [LARGE SCALE GENOMIC DNA]</scope>
    <source>
        <strain>ZK / E33L</strain>
    </source>
</reference>
<feature type="chain" id="PRO_0000340611" description="Sulfate adenylyltransferase">
    <location>
        <begin position="1"/>
        <end position="378"/>
    </location>
</feature>
<protein>
    <recommendedName>
        <fullName evidence="1">Sulfate adenylyltransferase</fullName>
        <ecNumber evidence="1">2.7.7.4</ecNumber>
    </recommendedName>
    <alternativeName>
        <fullName evidence="1">ATP-sulfurylase</fullName>
    </alternativeName>
    <alternativeName>
        <fullName evidence="1">Sulfate adenylate transferase</fullName>
        <shortName evidence="1">SAT</shortName>
    </alternativeName>
</protein>
<keyword id="KW-0067">ATP-binding</keyword>
<keyword id="KW-0547">Nucleotide-binding</keyword>
<keyword id="KW-0548">Nucleotidyltransferase</keyword>
<keyword id="KW-0808">Transferase</keyword>
<evidence type="ECO:0000255" key="1">
    <source>
        <dbReference type="HAMAP-Rule" id="MF_00066"/>
    </source>
</evidence>
<comment type="catalytic activity">
    <reaction evidence="1">
        <text>sulfate + ATP + H(+) = adenosine 5'-phosphosulfate + diphosphate</text>
        <dbReference type="Rhea" id="RHEA:18133"/>
        <dbReference type="ChEBI" id="CHEBI:15378"/>
        <dbReference type="ChEBI" id="CHEBI:16189"/>
        <dbReference type="ChEBI" id="CHEBI:30616"/>
        <dbReference type="ChEBI" id="CHEBI:33019"/>
        <dbReference type="ChEBI" id="CHEBI:58243"/>
        <dbReference type="EC" id="2.7.7.4"/>
    </reaction>
</comment>
<comment type="pathway">
    <text evidence="1">Sulfur metabolism; hydrogen sulfide biosynthesis; sulfite from sulfate: step 1/3.</text>
</comment>
<comment type="similarity">
    <text evidence="1">Belongs to the sulfate adenylyltransferase family.</text>
</comment>